<name>FABZ_NATTJ</name>
<keyword id="KW-0963">Cytoplasm</keyword>
<keyword id="KW-0441">Lipid A biosynthesis</keyword>
<keyword id="KW-0444">Lipid biosynthesis</keyword>
<keyword id="KW-0443">Lipid metabolism</keyword>
<keyword id="KW-0456">Lyase</keyword>
<keyword id="KW-1185">Reference proteome</keyword>
<gene>
    <name evidence="1" type="primary">fabZ</name>
    <name type="ordered locus">Nther_2332</name>
</gene>
<reference key="1">
    <citation type="submission" date="2008-04" db="EMBL/GenBank/DDBJ databases">
        <title>Complete sequence of chromosome of Natranaerobius thermophilus JW/NM-WN-LF.</title>
        <authorList>
            <consortium name="US DOE Joint Genome Institute"/>
            <person name="Copeland A."/>
            <person name="Lucas S."/>
            <person name="Lapidus A."/>
            <person name="Glavina del Rio T."/>
            <person name="Dalin E."/>
            <person name="Tice H."/>
            <person name="Bruce D."/>
            <person name="Goodwin L."/>
            <person name="Pitluck S."/>
            <person name="Chertkov O."/>
            <person name="Brettin T."/>
            <person name="Detter J.C."/>
            <person name="Han C."/>
            <person name="Kuske C.R."/>
            <person name="Schmutz J."/>
            <person name="Larimer F."/>
            <person name="Land M."/>
            <person name="Hauser L."/>
            <person name="Kyrpides N."/>
            <person name="Lykidis A."/>
            <person name="Mesbah N.M."/>
            <person name="Wiegel J."/>
        </authorList>
    </citation>
    <scope>NUCLEOTIDE SEQUENCE [LARGE SCALE GENOMIC DNA]</scope>
    <source>
        <strain>ATCC BAA-1301 / DSM 18059 / JW/NM-WN-LF</strain>
    </source>
</reference>
<dbReference type="EC" id="4.2.1.59" evidence="1"/>
<dbReference type="EMBL" id="CP001034">
    <property type="protein sequence ID" value="ACB85897.1"/>
    <property type="molecule type" value="Genomic_DNA"/>
</dbReference>
<dbReference type="RefSeq" id="WP_012448747.1">
    <property type="nucleotide sequence ID" value="NC_010718.1"/>
</dbReference>
<dbReference type="SMR" id="B2A8L3"/>
<dbReference type="FunCoup" id="B2A8L3">
    <property type="interactions" value="381"/>
</dbReference>
<dbReference type="STRING" id="457570.Nther_2332"/>
<dbReference type="KEGG" id="nth:Nther_2332"/>
<dbReference type="eggNOG" id="COG0764">
    <property type="taxonomic scope" value="Bacteria"/>
</dbReference>
<dbReference type="HOGENOM" id="CLU_078912_3_0_9"/>
<dbReference type="InParanoid" id="B2A8L3"/>
<dbReference type="OrthoDB" id="9772788at2"/>
<dbReference type="Proteomes" id="UP000001683">
    <property type="component" value="Chromosome"/>
</dbReference>
<dbReference type="GO" id="GO:0005737">
    <property type="term" value="C:cytoplasm"/>
    <property type="evidence" value="ECO:0007669"/>
    <property type="project" value="UniProtKB-SubCell"/>
</dbReference>
<dbReference type="GO" id="GO:0016020">
    <property type="term" value="C:membrane"/>
    <property type="evidence" value="ECO:0007669"/>
    <property type="project" value="GOC"/>
</dbReference>
<dbReference type="GO" id="GO:0019171">
    <property type="term" value="F:(3R)-hydroxyacyl-[acyl-carrier-protein] dehydratase activity"/>
    <property type="evidence" value="ECO:0007669"/>
    <property type="project" value="UniProtKB-EC"/>
</dbReference>
<dbReference type="GO" id="GO:0006633">
    <property type="term" value="P:fatty acid biosynthetic process"/>
    <property type="evidence" value="ECO:0007669"/>
    <property type="project" value="UniProtKB-UniRule"/>
</dbReference>
<dbReference type="GO" id="GO:0009245">
    <property type="term" value="P:lipid A biosynthetic process"/>
    <property type="evidence" value="ECO:0007669"/>
    <property type="project" value="UniProtKB-UniRule"/>
</dbReference>
<dbReference type="CDD" id="cd01288">
    <property type="entry name" value="FabZ"/>
    <property type="match status" value="1"/>
</dbReference>
<dbReference type="FunFam" id="3.10.129.10:FF:000001">
    <property type="entry name" value="3-hydroxyacyl-[acyl-carrier-protein] dehydratase FabZ"/>
    <property type="match status" value="1"/>
</dbReference>
<dbReference type="Gene3D" id="3.10.129.10">
    <property type="entry name" value="Hotdog Thioesterase"/>
    <property type="match status" value="1"/>
</dbReference>
<dbReference type="HAMAP" id="MF_00406">
    <property type="entry name" value="FabZ"/>
    <property type="match status" value="1"/>
</dbReference>
<dbReference type="InterPro" id="IPR013114">
    <property type="entry name" value="FabA_FabZ"/>
</dbReference>
<dbReference type="InterPro" id="IPR010084">
    <property type="entry name" value="FabZ"/>
</dbReference>
<dbReference type="InterPro" id="IPR029069">
    <property type="entry name" value="HotDog_dom_sf"/>
</dbReference>
<dbReference type="NCBIfam" id="TIGR01750">
    <property type="entry name" value="fabZ"/>
    <property type="match status" value="1"/>
</dbReference>
<dbReference type="NCBIfam" id="NF000582">
    <property type="entry name" value="PRK00006.1"/>
    <property type="match status" value="1"/>
</dbReference>
<dbReference type="PANTHER" id="PTHR30272">
    <property type="entry name" value="3-HYDROXYACYL-[ACYL-CARRIER-PROTEIN] DEHYDRATASE"/>
    <property type="match status" value="1"/>
</dbReference>
<dbReference type="PANTHER" id="PTHR30272:SF1">
    <property type="entry name" value="3-HYDROXYACYL-[ACYL-CARRIER-PROTEIN] DEHYDRATASE"/>
    <property type="match status" value="1"/>
</dbReference>
<dbReference type="Pfam" id="PF07977">
    <property type="entry name" value="FabA"/>
    <property type="match status" value="1"/>
</dbReference>
<dbReference type="SUPFAM" id="SSF54637">
    <property type="entry name" value="Thioesterase/thiol ester dehydrase-isomerase"/>
    <property type="match status" value="1"/>
</dbReference>
<sequence>MKDINEIKELIPHRYPILMVDRLEELEPGHRAKGVKNVSANEPFLQGHFPDRPLMPGVLQIEAMAQVGACALMSLPENEGKLAVFGGVDKVKFKRQVQPGDVLSIEVELTRVKGSIGKGEGKVYVGDELAAQGQLTFALVEK</sequence>
<protein>
    <recommendedName>
        <fullName evidence="1">3-hydroxyacyl-[acyl-carrier-protein] dehydratase FabZ</fullName>
        <ecNumber evidence="1">4.2.1.59</ecNumber>
    </recommendedName>
    <alternativeName>
        <fullName evidence="1">(3R)-hydroxymyristoyl-[acyl-carrier-protein] dehydratase</fullName>
        <shortName evidence="1">(3R)-hydroxymyristoyl-ACP dehydrase</shortName>
    </alternativeName>
    <alternativeName>
        <fullName evidence="1">Beta-hydroxyacyl-ACP dehydratase</fullName>
    </alternativeName>
</protein>
<feature type="chain" id="PRO_1000123649" description="3-hydroxyacyl-[acyl-carrier-protein] dehydratase FabZ">
    <location>
        <begin position="1"/>
        <end position="142"/>
    </location>
</feature>
<feature type="active site" evidence="1">
    <location>
        <position position="48"/>
    </location>
</feature>
<proteinExistence type="inferred from homology"/>
<accession>B2A8L3</accession>
<comment type="function">
    <text evidence="1">Involved in unsaturated fatty acids biosynthesis. Catalyzes the dehydration of short chain beta-hydroxyacyl-ACPs and long chain saturated and unsaturated beta-hydroxyacyl-ACPs.</text>
</comment>
<comment type="catalytic activity">
    <reaction evidence="1">
        <text>a (3R)-hydroxyacyl-[ACP] = a (2E)-enoyl-[ACP] + H2O</text>
        <dbReference type="Rhea" id="RHEA:13097"/>
        <dbReference type="Rhea" id="RHEA-COMP:9925"/>
        <dbReference type="Rhea" id="RHEA-COMP:9945"/>
        <dbReference type="ChEBI" id="CHEBI:15377"/>
        <dbReference type="ChEBI" id="CHEBI:78784"/>
        <dbReference type="ChEBI" id="CHEBI:78827"/>
        <dbReference type="EC" id="4.2.1.59"/>
    </reaction>
</comment>
<comment type="subcellular location">
    <subcellularLocation>
        <location evidence="1">Cytoplasm</location>
    </subcellularLocation>
</comment>
<comment type="similarity">
    <text evidence="1">Belongs to the thioester dehydratase family. FabZ subfamily.</text>
</comment>
<evidence type="ECO:0000255" key="1">
    <source>
        <dbReference type="HAMAP-Rule" id="MF_00406"/>
    </source>
</evidence>
<organism>
    <name type="scientific">Natranaerobius thermophilus (strain ATCC BAA-1301 / DSM 18059 / JW/NM-WN-LF)</name>
    <dbReference type="NCBI Taxonomy" id="457570"/>
    <lineage>
        <taxon>Bacteria</taxon>
        <taxon>Bacillati</taxon>
        <taxon>Bacillota</taxon>
        <taxon>Clostridia</taxon>
        <taxon>Natranaerobiales</taxon>
        <taxon>Natranaerobiaceae</taxon>
        <taxon>Natranaerobius</taxon>
    </lineage>
</organism>